<feature type="signal peptide" evidence="1">
    <location>
        <begin position="1"/>
        <end position="24"/>
    </location>
</feature>
<feature type="chain" id="PRO_0000014338" description="Putative uncharacterized protein YNL319W">
    <location>
        <begin position="25"/>
        <end position="146"/>
    </location>
</feature>
<feature type="glycosylation site" description="N-linked (GlcNAc...) asparagine" evidence="1">
    <location>
        <position position="99"/>
    </location>
</feature>
<feature type="glycosylation site" description="N-linked (GlcNAc...) asparagine" evidence="1">
    <location>
        <position position="106"/>
    </location>
</feature>
<accession>P53826</accession>
<proteinExistence type="uncertain"/>
<reference key="1">
    <citation type="journal article" date="1995" name="Yeast">
        <title>Sequencing analysis of a 24.7 kb fragment of yeast chromosome XIV identifies six known genes, a new member of the hexose transporter family and ten new open reading frames.</title>
        <authorList>
            <person name="Maftahi M."/>
            <person name="Nicaud J.-M."/>
            <person name="Levesque H."/>
            <person name="Gaillardin C."/>
        </authorList>
    </citation>
    <scope>NUCLEOTIDE SEQUENCE [GENOMIC DNA]</scope>
    <source>
        <strain>S288c / FY1676</strain>
    </source>
</reference>
<reference key="2">
    <citation type="journal article" date="1997" name="Nature">
        <title>The nucleotide sequence of Saccharomyces cerevisiae chromosome XIV and its evolutionary implications.</title>
        <authorList>
            <person name="Philippsen P."/>
            <person name="Kleine K."/>
            <person name="Poehlmann R."/>
            <person name="Duesterhoeft A."/>
            <person name="Hamberg K."/>
            <person name="Hegemann J.H."/>
            <person name="Obermaier B."/>
            <person name="Urrestarazu L.A."/>
            <person name="Aert R."/>
            <person name="Albermann K."/>
            <person name="Altmann R."/>
            <person name="Andre B."/>
            <person name="Baladron V."/>
            <person name="Ballesta J.P.G."/>
            <person name="Becam A.-M."/>
            <person name="Beinhauer J.D."/>
            <person name="Boskovic J."/>
            <person name="Buitrago M.J."/>
            <person name="Bussereau F."/>
            <person name="Coster F."/>
            <person name="Crouzet M."/>
            <person name="D'Angelo M."/>
            <person name="Dal Pero F."/>
            <person name="De Antoni A."/>
            <person name="del Rey F."/>
            <person name="Doignon F."/>
            <person name="Domdey H."/>
            <person name="Dubois E."/>
            <person name="Fiedler T.A."/>
            <person name="Fleig U."/>
            <person name="Floeth M."/>
            <person name="Fritz C."/>
            <person name="Gaillardin C."/>
            <person name="Garcia-Cantalejo J.M."/>
            <person name="Glansdorff N."/>
            <person name="Goffeau A."/>
            <person name="Gueldener U."/>
            <person name="Herbert C.J."/>
            <person name="Heumann K."/>
            <person name="Heuss-Neitzel D."/>
            <person name="Hilbert H."/>
            <person name="Hinni K."/>
            <person name="Iraqui Houssaini I."/>
            <person name="Jacquet M."/>
            <person name="Jimenez A."/>
            <person name="Jonniaux J.-L."/>
            <person name="Karpfinger-Hartl L."/>
            <person name="Lanfranchi G."/>
            <person name="Lepingle A."/>
            <person name="Levesque H."/>
            <person name="Lyck R."/>
            <person name="Maftahi M."/>
            <person name="Mallet L."/>
            <person name="Maurer C.T.C."/>
            <person name="Messenguy F."/>
            <person name="Mewes H.-W."/>
            <person name="Moestl D."/>
            <person name="Nasr F."/>
            <person name="Nicaud J.-M."/>
            <person name="Niedenthal R.K."/>
            <person name="Pandolfo D."/>
            <person name="Pierard A."/>
            <person name="Piravandi E."/>
            <person name="Planta R.J."/>
            <person name="Pohl T.M."/>
            <person name="Purnelle B."/>
            <person name="Rebischung C."/>
            <person name="Remacha M.A."/>
            <person name="Revuelta J.L."/>
            <person name="Rinke M."/>
            <person name="Saiz J.E."/>
            <person name="Sartorello F."/>
            <person name="Scherens B."/>
            <person name="Sen-Gupta M."/>
            <person name="Soler-Mira A."/>
            <person name="Urbanus J.H.M."/>
            <person name="Valle G."/>
            <person name="Van Dyck L."/>
            <person name="Verhasselt P."/>
            <person name="Vierendeels F."/>
            <person name="Vissers S."/>
            <person name="Voet M."/>
            <person name="Volckaert G."/>
            <person name="Wach A."/>
            <person name="Wambutt R."/>
            <person name="Wedler H."/>
            <person name="Zollner A."/>
            <person name="Hani J."/>
        </authorList>
    </citation>
    <scope>NUCLEOTIDE SEQUENCE [LARGE SCALE GENOMIC DNA]</scope>
    <source>
        <strain>ATCC 204508 / S288c</strain>
    </source>
</reference>
<reference key="3">
    <citation type="journal article" date="2014" name="G3 (Bethesda)">
        <title>The reference genome sequence of Saccharomyces cerevisiae: Then and now.</title>
        <authorList>
            <person name="Engel S.R."/>
            <person name="Dietrich F.S."/>
            <person name="Fisk D.G."/>
            <person name="Binkley G."/>
            <person name="Balakrishnan R."/>
            <person name="Costanzo M.C."/>
            <person name="Dwight S.S."/>
            <person name="Hitz B.C."/>
            <person name="Karra K."/>
            <person name="Nash R.S."/>
            <person name="Weng S."/>
            <person name="Wong E.D."/>
            <person name="Lloyd P."/>
            <person name="Skrzypek M.S."/>
            <person name="Miyasato S.R."/>
            <person name="Simison M."/>
            <person name="Cherry J.M."/>
        </authorList>
    </citation>
    <scope>GENOME REANNOTATION</scope>
    <source>
        <strain>ATCC 204508 / S288c</strain>
    </source>
</reference>
<protein>
    <recommendedName>
        <fullName>Putative uncharacterized protein YNL319W</fullName>
    </recommendedName>
</protein>
<comment type="miscellaneous">
    <text evidence="2">Partially overlaps HXT14.</text>
</comment>
<comment type="caution">
    <text evidence="3">Product of a dubious gene prediction unlikely to encode a functional protein. Because of that it is not part of the S.cerevisiae S288c complete/reference proteome set.</text>
</comment>
<name>YN59_YEAST</name>
<gene>
    <name type="ordered locus">YNL319W</name>
    <name type="ORF">N0343</name>
</gene>
<keyword id="KW-0325">Glycoprotein</keyword>
<keyword id="KW-0732">Signal</keyword>
<dbReference type="EMBL" id="Z46259">
    <property type="status" value="NOT_ANNOTATED_CDS"/>
    <property type="molecule type" value="Genomic_DNA"/>
</dbReference>
<dbReference type="EMBL" id="Z71595">
    <property type="protein sequence ID" value="CAA96249.1"/>
    <property type="molecule type" value="Genomic_DNA"/>
</dbReference>
<dbReference type="PIR" id="S59575">
    <property type="entry name" value="S59575"/>
</dbReference>
<dbReference type="DIP" id="DIP-4463N"/>
<dbReference type="STRING" id="4932.YNL319W"/>
<dbReference type="PaxDb" id="4932-YNL319W"/>
<dbReference type="EnsemblFungi" id="YNL319W_mRNA">
    <property type="protein sequence ID" value="YNL319W"/>
    <property type="gene ID" value="YNL319W"/>
</dbReference>
<dbReference type="AGR" id="SGD:S000005263"/>
<dbReference type="SGD" id="S000005263">
    <property type="gene designation" value="YNL319W"/>
</dbReference>
<dbReference type="HOGENOM" id="CLU_1778920_0_0_1"/>
<evidence type="ECO:0000255" key="1"/>
<evidence type="ECO:0000305" key="2"/>
<evidence type="ECO:0000305" key="3">
    <source>
    </source>
</evidence>
<organism>
    <name type="scientific">Saccharomyces cerevisiae (strain ATCC 204508 / S288c)</name>
    <name type="common">Baker's yeast</name>
    <dbReference type="NCBI Taxonomy" id="559292"/>
    <lineage>
        <taxon>Eukaryota</taxon>
        <taxon>Fungi</taxon>
        <taxon>Dikarya</taxon>
        <taxon>Ascomycota</taxon>
        <taxon>Saccharomycotina</taxon>
        <taxon>Saccharomycetes</taxon>
        <taxon>Saccharomycetales</taxon>
        <taxon>Saccharomycetaceae</taxon>
        <taxon>Saccharomyces</taxon>
    </lineage>
</organism>
<sequence>MVIYYGKKNCTLLLLLFILCNIYSGSNILLISCSFFFLVSGTSIQLNIINANRQAANMYPSLKSILDTIIGVKSDIKKLNIQLINVQIAIDMALVLRGNNSDTSTNVTGPNVIANQKIKQQVTIIKTIFEKSVSLPNVPTVAYVII</sequence>